<feature type="chain" id="PRO_0000225815" description="UPF0145 protein BMA0904">
    <location>
        <begin position="1"/>
        <end position="111"/>
    </location>
</feature>
<gene>
    <name type="ordered locus">BMA0904</name>
</gene>
<dbReference type="EMBL" id="CP000010">
    <property type="protein sequence ID" value="AAU49063.1"/>
    <property type="molecule type" value="Genomic_DNA"/>
</dbReference>
<dbReference type="RefSeq" id="WP_004193399.1">
    <property type="nucleotide sequence ID" value="NC_006348.1"/>
</dbReference>
<dbReference type="RefSeq" id="YP_102632.1">
    <property type="nucleotide sequence ID" value="NC_006348.1"/>
</dbReference>
<dbReference type="SMR" id="Q62KY7"/>
<dbReference type="KEGG" id="bma:BMA0904"/>
<dbReference type="PATRIC" id="fig|243160.12.peg.936"/>
<dbReference type="eggNOG" id="COG0393">
    <property type="taxonomic scope" value="Bacteria"/>
</dbReference>
<dbReference type="HOGENOM" id="CLU_117144_1_1_4"/>
<dbReference type="Proteomes" id="UP000006693">
    <property type="component" value="Chromosome 1"/>
</dbReference>
<dbReference type="Gene3D" id="3.30.110.70">
    <property type="entry name" value="Hypothetical protein apc22750. Chain B"/>
    <property type="match status" value="1"/>
</dbReference>
<dbReference type="HAMAP" id="MF_00338">
    <property type="entry name" value="UPF0145"/>
    <property type="match status" value="1"/>
</dbReference>
<dbReference type="InterPro" id="IPR035439">
    <property type="entry name" value="UPF0145_dom_sf"/>
</dbReference>
<dbReference type="InterPro" id="IPR002765">
    <property type="entry name" value="UPF0145_YbjQ-like"/>
</dbReference>
<dbReference type="PANTHER" id="PTHR34068:SF2">
    <property type="entry name" value="UPF0145 PROTEIN SCO3412"/>
    <property type="match status" value="1"/>
</dbReference>
<dbReference type="PANTHER" id="PTHR34068">
    <property type="entry name" value="UPF0145 PROTEIN YBJQ"/>
    <property type="match status" value="1"/>
</dbReference>
<dbReference type="Pfam" id="PF01906">
    <property type="entry name" value="YbjQ_1"/>
    <property type="match status" value="1"/>
</dbReference>
<dbReference type="SUPFAM" id="SSF117782">
    <property type="entry name" value="YbjQ-like"/>
    <property type="match status" value="1"/>
</dbReference>
<accession>Q62KY7</accession>
<keyword id="KW-1185">Reference proteome</keyword>
<evidence type="ECO:0000255" key="1">
    <source>
        <dbReference type="HAMAP-Rule" id="MF_00338"/>
    </source>
</evidence>
<protein>
    <recommendedName>
        <fullName evidence="1">UPF0145 protein BMA0904</fullName>
    </recommendedName>
</protein>
<name>Y904_BURMA</name>
<reference key="1">
    <citation type="journal article" date="2004" name="Proc. Natl. Acad. Sci. U.S.A.">
        <title>Structural flexibility in the Burkholderia mallei genome.</title>
        <authorList>
            <person name="Nierman W.C."/>
            <person name="DeShazer D."/>
            <person name="Kim H.S."/>
            <person name="Tettelin H."/>
            <person name="Nelson K.E."/>
            <person name="Feldblyum T.V."/>
            <person name="Ulrich R.L."/>
            <person name="Ronning C.M."/>
            <person name="Brinkac L.M."/>
            <person name="Daugherty S.C."/>
            <person name="Davidsen T.D."/>
            <person name="DeBoy R.T."/>
            <person name="Dimitrov G."/>
            <person name="Dodson R.J."/>
            <person name="Durkin A.S."/>
            <person name="Gwinn M.L."/>
            <person name="Haft D.H."/>
            <person name="Khouri H.M."/>
            <person name="Kolonay J.F."/>
            <person name="Madupu R."/>
            <person name="Mohammoud Y."/>
            <person name="Nelson W.C."/>
            <person name="Radune D."/>
            <person name="Romero C.M."/>
            <person name="Sarria S."/>
            <person name="Selengut J."/>
            <person name="Shamblin C."/>
            <person name="Sullivan S.A."/>
            <person name="White O."/>
            <person name="Yu Y."/>
            <person name="Zafar N."/>
            <person name="Zhou L."/>
            <person name="Fraser C.M."/>
        </authorList>
    </citation>
    <scope>NUCLEOTIDE SEQUENCE [LARGE SCALE GENOMIC DNA]</scope>
    <source>
        <strain>ATCC 23344</strain>
    </source>
</reference>
<comment type="similarity">
    <text evidence="1">Belongs to the UPF0145 family.</text>
</comment>
<sequence length="111" mass="11953">MADPQLITTAFDIPGYRIERSLGVARGIVVRSRSIVGTFGASIQTLFGGNISLYTSLCERARQDAYERMIDEARRMGGNAIVGMRYDATEIASGVTEVLCYGTAVQAVRAG</sequence>
<organism>
    <name type="scientific">Burkholderia mallei (strain ATCC 23344)</name>
    <dbReference type="NCBI Taxonomy" id="243160"/>
    <lineage>
        <taxon>Bacteria</taxon>
        <taxon>Pseudomonadati</taxon>
        <taxon>Pseudomonadota</taxon>
        <taxon>Betaproteobacteria</taxon>
        <taxon>Burkholderiales</taxon>
        <taxon>Burkholderiaceae</taxon>
        <taxon>Burkholderia</taxon>
        <taxon>pseudomallei group</taxon>
    </lineage>
</organism>
<proteinExistence type="inferred from homology"/>